<keyword id="KW-0227">DNA damage</keyword>
<keyword id="KW-0233">DNA recombination</keyword>
<keyword id="KW-0234">DNA repair</keyword>
<keyword id="KW-0479">Metal-binding</keyword>
<keyword id="KW-0862">Zinc</keyword>
<keyword id="KW-0863">Zinc-finger</keyword>
<accession>Q056Q1</accession>
<comment type="function">
    <text evidence="1">May play a role in DNA repair. It seems to be involved in an RecBC-independent recombinational process of DNA repair. It may act with RecF and RecO.</text>
</comment>
<comment type="similarity">
    <text evidence="1">Belongs to the RecR family.</text>
</comment>
<sequence length="197" mass="22253">MANHLLEEMVDALSSLPGIGRKSAFRISFHLLRLEQGHFNHFIHQLTNTKNKIKFCKRCGSYAETEICNICTSEKRDTHTFCVVEQPEDIFFIENTREFHGKYHVLNGVISPLEGIGPKDLRIKELLERIEPEQIKEVLVATNPTLEGDATADYLASQLKPLSVDVTRIAYGITVGGSIELADQYTLGRAIRSRLQL</sequence>
<reference key="1">
    <citation type="journal article" date="2006" name="Proc. Natl. Acad. Sci. U.S.A.">
        <title>Genome reduction in Leptospira borgpetersenii reflects limited transmission potential.</title>
        <authorList>
            <person name="Bulach D.M."/>
            <person name="Zuerner R.L."/>
            <person name="Wilson P."/>
            <person name="Seemann T."/>
            <person name="McGrath A."/>
            <person name="Cullen P.A."/>
            <person name="Davis J."/>
            <person name="Johnson M."/>
            <person name="Kuczek E."/>
            <person name="Alt D.P."/>
            <person name="Peterson-Burch B."/>
            <person name="Coppel R.L."/>
            <person name="Rood J.I."/>
            <person name="Davies J.K."/>
            <person name="Adler B."/>
        </authorList>
    </citation>
    <scope>NUCLEOTIDE SEQUENCE [LARGE SCALE GENOMIC DNA]</scope>
    <source>
        <strain>L550</strain>
    </source>
</reference>
<organism>
    <name type="scientific">Leptospira borgpetersenii serovar Hardjo-bovis (strain L550)</name>
    <dbReference type="NCBI Taxonomy" id="355276"/>
    <lineage>
        <taxon>Bacteria</taxon>
        <taxon>Pseudomonadati</taxon>
        <taxon>Spirochaetota</taxon>
        <taxon>Spirochaetia</taxon>
        <taxon>Leptospirales</taxon>
        <taxon>Leptospiraceae</taxon>
        <taxon>Leptospira</taxon>
    </lineage>
</organism>
<feature type="chain" id="PRO_0000322903" description="Recombination protein RecR">
    <location>
        <begin position="1"/>
        <end position="197"/>
    </location>
</feature>
<feature type="domain" description="Toprim" evidence="1">
    <location>
        <begin position="79"/>
        <end position="174"/>
    </location>
</feature>
<feature type="zinc finger region" description="C4-type" evidence="1">
    <location>
        <begin position="56"/>
        <end position="71"/>
    </location>
</feature>
<dbReference type="EMBL" id="CP000348">
    <property type="protein sequence ID" value="ABJ77694.1"/>
    <property type="molecule type" value="Genomic_DNA"/>
</dbReference>
<dbReference type="SMR" id="Q056Q1"/>
<dbReference type="KEGG" id="lbl:LBL_0066"/>
<dbReference type="HOGENOM" id="CLU_060739_1_0_12"/>
<dbReference type="GO" id="GO:0003677">
    <property type="term" value="F:DNA binding"/>
    <property type="evidence" value="ECO:0007669"/>
    <property type="project" value="UniProtKB-UniRule"/>
</dbReference>
<dbReference type="GO" id="GO:0008270">
    <property type="term" value="F:zinc ion binding"/>
    <property type="evidence" value="ECO:0007669"/>
    <property type="project" value="UniProtKB-KW"/>
</dbReference>
<dbReference type="GO" id="GO:0006310">
    <property type="term" value="P:DNA recombination"/>
    <property type="evidence" value="ECO:0007669"/>
    <property type="project" value="UniProtKB-UniRule"/>
</dbReference>
<dbReference type="GO" id="GO:0006281">
    <property type="term" value="P:DNA repair"/>
    <property type="evidence" value="ECO:0007669"/>
    <property type="project" value="UniProtKB-UniRule"/>
</dbReference>
<dbReference type="CDD" id="cd01025">
    <property type="entry name" value="TOPRIM_recR"/>
    <property type="match status" value="1"/>
</dbReference>
<dbReference type="Gene3D" id="3.40.1360.10">
    <property type="match status" value="1"/>
</dbReference>
<dbReference type="Gene3D" id="6.10.250.240">
    <property type="match status" value="1"/>
</dbReference>
<dbReference type="Gene3D" id="1.10.8.420">
    <property type="entry name" value="RecR Domain 1"/>
    <property type="match status" value="1"/>
</dbReference>
<dbReference type="HAMAP" id="MF_00017">
    <property type="entry name" value="RecR"/>
    <property type="match status" value="1"/>
</dbReference>
<dbReference type="InterPro" id="IPR000093">
    <property type="entry name" value="DNA_Rcmb_RecR"/>
</dbReference>
<dbReference type="InterPro" id="IPR023627">
    <property type="entry name" value="Rcmb_RecR"/>
</dbReference>
<dbReference type="InterPro" id="IPR015967">
    <property type="entry name" value="Rcmb_RecR_Znf"/>
</dbReference>
<dbReference type="InterPro" id="IPR006171">
    <property type="entry name" value="TOPRIM_dom"/>
</dbReference>
<dbReference type="InterPro" id="IPR034137">
    <property type="entry name" value="TOPRIM_RecR"/>
</dbReference>
<dbReference type="NCBIfam" id="TIGR00615">
    <property type="entry name" value="recR"/>
    <property type="match status" value="1"/>
</dbReference>
<dbReference type="PANTHER" id="PTHR30446">
    <property type="entry name" value="RECOMBINATION PROTEIN RECR"/>
    <property type="match status" value="1"/>
</dbReference>
<dbReference type="PANTHER" id="PTHR30446:SF0">
    <property type="entry name" value="RECOMBINATION PROTEIN RECR"/>
    <property type="match status" value="1"/>
</dbReference>
<dbReference type="Pfam" id="PF21176">
    <property type="entry name" value="RecR_HhH"/>
    <property type="match status" value="1"/>
</dbReference>
<dbReference type="Pfam" id="PF02132">
    <property type="entry name" value="RecR_ZnF"/>
    <property type="match status" value="1"/>
</dbReference>
<dbReference type="Pfam" id="PF13662">
    <property type="entry name" value="Toprim_4"/>
    <property type="match status" value="1"/>
</dbReference>
<dbReference type="SMART" id="SM00493">
    <property type="entry name" value="TOPRIM"/>
    <property type="match status" value="1"/>
</dbReference>
<dbReference type="SUPFAM" id="SSF111304">
    <property type="entry name" value="Recombination protein RecR"/>
    <property type="match status" value="1"/>
</dbReference>
<dbReference type="PROSITE" id="PS01300">
    <property type="entry name" value="RECR"/>
    <property type="match status" value="1"/>
</dbReference>
<dbReference type="PROSITE" id="PS50880">
    <property type="entry name" value="TOPRIM"/>
    <property type="match status" value="1"/>
</dbReference>
<name>RECR_LEPBL</name>
<protein>
    <recommendedName>
        <fullName evidence="1">Recombination protein RecR</fullName>
    </recommendedName>
</protein>
<gene>
    <name evidence="1" type="primary">recR</name>
    <name type="ordered locus">LBL_0066</name>
</gene>
<evidence type="ECO:0000255" key="1">
    <source>
        <dbReference type="HAMAP-Rule" id="MF_00017"/>
    </source>
</evidence>
<proteinExistence type="inferred from homology"/>